<evidence type="ECO:0000255" key="1">
    <source>
        <dbReference type="HAMAP-Rule" id="MF_00952"/>
    </source>
</evidence>
<evidence type="ECO:0000255" key="2">
    <source>
        <dbReference type="PROSITE-ProRule" id="PRU01383"/>
    </source>
</evidence>
<evidence type="ECO:0000256" key="3">
    <source>
        <dbReference type="SAM" id="MobiDB-lite"/>
    </source>
</evidence>
<organism>
    <name type="scientific">Mycobacterium tuberculosis (strain CDC 1551 / Oshkosh)</name>
    <dbReference type="NCBI Taxonomy" id="83331"/>
    <lineage>
        <taxon>Bacteria</taxon>
        <taxon>Bacillati</taxon>
        <taxon>Actinomycetota</taxon>
        <taxon>Actinomycetes</taxon>
        <taxon>Mycobacteriales</taxon>
        <taxon>Mycobacteriaceae</taxon>
        <taxon>Mycobacterium</taxon>
        <taxon>Mycobacterium tuberculosis complex</taxon>
    </lineage>
</organism>
<sequence length="934" mass="102336">MADPKTKGRGSGGNGSGRRLVIVESPTKARKLASYLGSGYIVESSRGHIRDLPRAASDVPAKYKSQPWARLGVNVDADFEPLYIISPEKRSTVSELRGLLKDVDELYLATDGDREGEAIAWHLLETLKPRIPVKRMVFHEITEPAIRAAAEHPRDLDIDLVDAQETRRILDRLYGYEVSPVLWKKVAPKLSAGRVQSVATRIIVARERDRMAFRSAAYWDILAKLDASVSDPDAAPPTFSARLTAVAGRRVATGRDFDSLGTLRKGDEVIVLDEGSATALAAGLDGTQLTVASAEEKPYARRPYPPFMTSTLQQEASRKLRFSAERTMSIAQRLYENGYITYMRTDSTTLSESAINAARTQARQLYGDEYVAPAPRQYTRKVKNAQEAHEAIRPAGETFATPDAVRRELDGPNIDDFRLYELIWQRTVASQMADARGMTLSLRITGMSGHQEVVFSATGRTLTFPGFLKAYVETVDELVGGEADDAERRLPHLTPGQRLDIVELTPDGHATNPPARYTEASLVKALEELGIGRPSTYSSIIKTIQDRGYVHKKGSALVPSWVAFAVTGLLEQHFGRLVDYDFTAAMEDELDEIAAGNERRTNWLNNFYFGGDHGVPDSVARSGGLKKLVGINLEGIDAREVNSIKLFDDTHGRPIYVRVGKNGPYLERLVAGDTGEPTPQRANLSDSITPDELTLQVAEELFATPQQGRTLGLDPETGHEIVAREGRFGPYVTEILPEPAADAAAAAQGVKKRQKAAGPKPRTGSLLRSMDLQTVTLEDALRLLSLPRVVGVDPASGEEITAQNGRYGPYLKRGNDSRSLVTEDQIFTITLDEALKIYAEPKRRGRQSASAPPLRELGTDPASGKPMVIKDGRFGPYVTDGETNASLRKGDDVASITDERAAELLADRRARGPAKRPARKAARKVPAKKAAKRD</sequence>
<accession>P9WG48</accession>
<accession>L0TDE3</accession>
<accession>O08383</accession>
<accession>P0A620</accession>
<accession>Q59567</accession>
<protein>
    <recommendedName>
        <fullName evidence="1">DNA topoisomerase 1</fullName>
        <ecNumber evidence="1">5.6.2.1</ecNumber>
    </recommendedName>
    <alternativeName>
        <fullName evidence="1">DNA topoisomerase I</fullName>
    </alternativeName>
    <alternativeName>
        <fullName>Omega-protein</fullName>
    </alternativeName>
    <alternativeName>
        <fullName>Relaxing enzyme</fullName>
    </alternativeName>
    <alternativeName>
        <fullName>Swivelase</fullName>
    </alternativeName>
    <alternativeName>
        <fullName>Untwisting enzyme</fullName>
    </alternativeName>
</protein>
<feature type="chain" id="PRO_0000428424" description="DNA topoisomerase 1">
    <location>
        <begin position="1"/>
        <end position="934"/>
    </location>
</feature>
<feature type="domain" description="Toprim" evidence="1">
    <location>
        <begin position="18"/>
        <end position="142"/>
    </location>
</feature>
<feature type="domain" description="Topo IA-type catalytic" evidence="2">
    <location>
        <begin position="157"/>
        <end position="616"/>
    </location>
</feature>
<feature type="region of interest" description="Disordered" evidence="3">
    <location>
        <begin position="1"/>
        <end position="20"/>
    </location>
</feature>
<feature type="region of interest" description="Interaction with DNA" evidence="1">
    <location>
        <begin position="191"/>
        <end position="196"/>
    </location>
</feature>
<feature type="region of interest" description="Disordered" evidence="3">
    <location>
        <begin position="746"/>
        <end position="765"/>
    </location>
</feature>
<feature type="region of interest" description="Disordered" evidence="3">
    <location>
        <begin position="842"/>
        <end position="892"/>
    </location>
</feature>
<feature type="region of interest" description="Disordered" evidence="3">
    <location>
        <begin position="905"/>
        <end position="934"/>
    </location>
</feature>
<feature type="compositionally biased region" description="Basic residues" evidence="3">
    <location>
        <begin position="911"/>
        <end position="934"/>
    </location>
</feature>
<feature type="active site" description="O-(5'-phospho-DNA)-tyrosine intermediate" evidence="2">
    <location>
        <position position="342"/>
    </location>
</feature>
<feature type="binding site" evidence="1">
    <location>
        <position position="24"/>
    </location>
    <ligand>
        <name>Mg(2+)</name>
        <dbReference type="ChEBI" id="CHEBI:18420"/>
        <note>catalytic</note>
    </ligand>
</feature>
<feature type="binding site" evidence="1">
    <location>
        <position position="111"/>
    </location>
    <ligand>
        <name>Mg(2+)</name>
        <dbReference type="ChEBI" id="CHEBI:18420"/>
        <note>catalytic</note>
    </ligand>
</feature>
<feature type="site" description="Interaction with DNA" evidence="1">
    <location>
        <position position="48"/>
    </location>
</feature>
<feature type="site" description="Interaction with DNA" evidence="1">
    <location>
        <position position="167"/>
    </location>
</feature>
<feature type="site" description="Interaction with DNA" evidence="1">
    <location>
        <position position="168"/>
    </location>
</feature>
<feature type="site" description="Interaction with DNA" evidence="1">
    <location>
        <position position="171"/>
    </location>
</feature>
<feature type="site" description="Interaction with DNA" evidence="1">
    <location>
        <position position="176"/>
    </location>
</feature>
<feature type="site" description="Interaction with DNA" evidence="1">
    <location>
        <position position="183"/>
    </location>
</feature>
<feature type="site" description="Interaction with DNA" evidence="1">
    <location>
        <position position="344"/>
    </location>
</feature>
<feature type="site" description="Interaction with DNA" evidence="1">
    <location>
        <position position="547"/>
    </location>
</feature>
<keyword id="KW-0238">DNA-binding</keyword>
<keyword id="KW-0413">Isomerase</keyword>
<keyword id="KW-0460">Magnesium</keyword>
<keyword id="KW-0479">Metal-binding</keyword>
<keyword id="KW-1185">Reference proteome</keyword>
<keyword id="KW-0799">Topoisomerase</keyword>
<dbReference type="EC" id="5.6.2.1" evidence="1"/>
<dbReference type="EMBL" id="AE000516">
    <property type="protein sequence ID" value="AAK48109.1"/>
    <property type="molecule type" value="Genomic_DNA"/>
</dbReference>
<dbReference type="PIR" id="G70563">
    <property type="entry name" value="G70563"/>
</dbReference>
<dbReference type="RefSeq" id="WP_003899617.1">
    <property type="nucleotide sequence ID" value="NZ_KK341227.1"/>
</dbReference>
<dbReference type="SMR" id="P9WG48"/>
<dbReference type="GeneID" id="45427643"/>
<dbReference type="KEGG" id="mtc:MT3749"/>
<dbReference type="PATRIC" id="fig|83331.31.peg.4034"/>
<dbReference type="HOGENOM" id="CLU_002929_2_0_11"/>
<dbReference type="Proteomes" id="UP000001020">
    <property type="component" value="Chromosome"/>
</dbReference>
<dbReference type="GO" id="GO:0003677">
    <property type="term" value="F:DNA binding"/>
    <property type="evidence" value="ECO:0007669"/>
    <property type="project" value="UniProtKB-KW"/>
</dbReference>
<dbReference type="GO" id="GO:0003917">
    <property type="term" value="F:DNA topoisomerase type I (single strand cut, ATP-independent) activity"/>
    <property type="evidence" value="ECO:0007669"/>
    <property type="project" value="UniProtKB-UniRule"/>
</dbReference>
<dbReference type="GO" id="GO:0046872">
    <property type="term" value="F:metal ion binding"/>
    <property type="evidence" value="ECO:0007669"/>
    <property type="project" value="UniProtKB-KW"/>
</dbReference>
<dbReference type="GO" id="GO:0006265">
    <property type="term" value="P:DNA topological change"/>
    <property type="evidence" value="ECO:0007669"/>
    <property type="project" value="UniProtKB-UniRule"/>
</dbReference>
<dbReference type="CDD" id="cd00186">
    <property type="entry name" value="TOP1Ac"/>
    <property type="match status" value="1"/>
</dbReference>
<dbReference type="CDD" id="cd03363">
    <property type="entry name" value="TOPRIM_TopoIA_TopoI"/>
    <property type="match status" value="1"/>
</dbReference>
<dbReference type="FunFam" id="1.10.290.10:FF:000002">
    <property type="entry name" value="DNA topoisomerase 1"/>
    <property type="match status" value="1"/>
</dbReference>
<dbReference type="FunFam" id="3.40.50.140:FF:000001">
    <property type="entry name" value="DNA topoisomerase 1"/>
    <property type="match status" value="1"/>
</dbReference>
<dbReference type="Gene3D" id="3.40.50.140">
    <property type="match status" value="1"/>
</dbReference>
<dbReference type="Gene3D" id="1.10.460.10">
    <property type="entry name" value="Topoisomerase I, domain 2"/>
    <property type="match status" value="1"/>
</dbReference>
<dbReference type="Gene3D" id="2.70.20.10">
    <property type="entry name" value="Topoisomerase I, domain 3"/>
    <property type="match status" value="1"/>
</dbReference>
<dbReference type="Gene3D" id="1.10.290.10">
    <property type="entry name" value="Topoisomerase I, domain 4"/>
    <property type="match status" value="1"/>
</dbReference>
<dbReference type="HAMAP" id="MF_00952">
    <property type="entry name" value="Topoisom_1_prok"/>
    <property type="match status" value="1"/>
</dbReference>
<dbReference type="InterPro" id="IPR000380">
    <property type="entry name" value="Topo_IA"/>
</dbReference>
<dbReference type="InterPro" id="IPR003601">
    <property type="entry name" value="Topo_IA_2"/>
</dbReference>
<dbReference type="InterPro" id="IPR023406">
    <property type="entry name" value="Topo_IA_AS"/>
</dbReference>
<dbReference type="InterPro" id="IPR013497">
    <property type="entry name" value="Topo_IA_cen"/>
</dbReference>
<dbReference type="InterPro" id="IPR013824">
    <property type="entry name" value="Topo_IA_cen_sub1"/>
</dbReference>
<dbReference type="InterPro" id="IPR013825">
    <property type="entry name" value="Topo_IA_cen_sub2"/>
</dbReference>
<dbReference type="InterPro" id="IPR013826">
    <property type="entry name" value="Topo_IA_cen_sub3"/>
</dbReference>
<dbReference type="InterPro" id="IPR023405">
    <property type="entry name" value="Topo_IA_core_domain"/>
</dbReference>
<dbReference type="InterPro" id="IPR003602">
    <property type="entry name" value="Topo_IA_DNA-bd_dom"/>
</dbReference>
<dbReference type="InterPro" id="IPR005733">
    <property type="entry name" value="TopoI_bac-type"/>
</dbReference>
<dbReference type="InterPro" id="IPR028612">
    <property type="entry name" value="Topoisom_1_IA"/>
</dbReference>
<dbReference type="InterPro" id="IPR025589">
    <property type="entry name" value="Toprim_C_rpt"/>
</dbReference>
<dbReference type="InterPro" id="IPR006171">
    <property type="entry name" value="TOPRIM_dom"/>
</dbReference>
<dbReference type="InterPro" id="IPR034149">
    <property type="entry name" value="TOPRIM_TopoI"/>
</dbReference>
<dbReference type="NCBIfam" id="TIGR01051">
    <property type="entry name" value="topA_bact"/>
    <property type="match status" value="1"/>
</dbReference>
<dbReference type="PANTHER" id="PTHR42785:SF1">
    <property type="entry name" value="DNA TOPOISOMERASE"/>
    <property type="match status" value="1"/>
</dbReference>
<dbReference type="PANTHER" id="PTHR42785">
    <property type="entry name" value="DNA TOPOISOMERASE, TYPE IA, CORE"/>
    <property type="match status" value="1"/>
</dbReference>
<dbReference type="Pfam" id="PF01131">
    <property type="entry name" value="Topoisom_bac"/>
    <property type="match status" value="1"/>
</dbReference>
<dbReference type="Pfam" id="PF01751">
    <property type="entry name" value="Toprim"/>
    <property type="match status" value="1"/>
</dbReference>
<dbReference type="Pfam" id="PF13368">
    <property type="entry name" value="Toprim_C_rpt"/>
    <property type="match status" value="4"/>
</dbReference>
<dbReference type="PRINTS" id="PR00417">
    <property type="entry name" value="PRTPISMRASEI"/>
</dbReference>
<dbReference type="SMART" id="SM00437">
    <property type="entry name" value="TOP1Ac"/>
    <property type="match status" value="1"/>
</dbReference>
<dbReference type="SMART" id="SM00436">
    <property type="entry name" value="TOP1Bc"/>
    <property type="match status" value="1"/>
</dbReference>
<dbReference type="SMART" id="SM00493">
    <property type="entry name" value="TOPRIM"/>
    <property type="match status" value="1"/>
</dbReference>
<dbReference type="SUPFAM" id="SSF56712">
    <property type="entry name" value="Prokaryotic type I DNA topoisomerase"/>
    <property type="match status" value="1"/>
</dbReference>
<dbReference type="PROSITE" id="PS00396">
    <property type="entry name" value="TOPO_IA_1"/>
    <property type="match status" value="1"/>
</dbReference>
<dbReference type="PROSITE" id="PS52039">
    <property type="entry name" value="TOPO_IA_2"/>
    <property type="match status" value="1"/>
</dbReference>
<dbReference type="PROSITE" id="PS50880">
    <property type="entry name" value="TOPRIM"/>
    <property type="match status" value="1"/>
</dbReference>
<gene>
    <name evidence="1" type="primary">topA</name>
    <name type="ordered locus">MT3749</name>
</gene>
<proteinExistence type="inferred from homology"/>
<comment type="function">
    <text evidence="1">Releases the supercoiling and torsional tension of DNA, which is introduced during the DNA replication and transcription, by transiently cleaving and rejoining one strand of the DNA duplex. Introduces a single-strand break via transesterification at a target site in duplex DNA. The scissile phosphodiester is attacked by the catalytic tyrosine of the enzyme, resulting in the formation of a DNA-(5'-phosphotyrosyl)-enzyme intermediate and the expulsion of a 3'-OH DNA strand. The free DNA strand then undergoes passage around the unbroken strand, thus removing DNA supercoils. Finally, in the religation step, the DNA 3'-OH attacks the covalent intermediate to expel the active-site tyrosine and restore the DNA phosphodiester backbone.</text>
</comment>
<comment type="catalytic activity">
    <reaction evidence="1">
        <text>ATP-independent breakage of single-stranded DNA, followed by passage and rejoining.</text>
        <dbReference type="EC" id="5.6.2.1"/>
    </reaction>
</comment>
<comment type="cofactor">
    <cofactor evidence="1">
        <name>Mg(2+)</name>
        <dbReference type="ChEBI" id="CHEBI:18420"/>
    </cofactor>
</comment>
<comment type="subunit">
    <text evidence="1">Monomer.</text>
</comment>
<comment type="similarity">
    <text evidence="1">Belongs to the type IA topoisomerase family.</text>
</comment>
<name>TOP1_MYCTO</name>
<reference key="1">
    <citation type="journal article" date="2002" name="J. Bacteriol.">
        <title>Whole-genome comparison of Mycobacterium tuberculosis clinical and laboratory strains.</title>
        <authorList>
            <person name="Fleischmann R.D."/>
            <person name="Alland D."/>
            <person name="Eisen J.A."/>
            <person name="Carpenter L."/>
            <person name="White O."/>
            <person name="Peterson J.D."/>
            <person name="DeBoy R.T."/>
            <person name="Dodson R.J."/>
            <person name="Gwinn M.L."/>
            <person name="Haft D.H."/>
            <person name="Hickey E.K."/>
            <person name="Kolonay J.F."/>
            <person name="Nelson W.C."/>
            <person name="Umayam L.A."/>
            <person name="Ermolaeva M.D."/>
            <person name="Salzberg S.L."/>
            <person name="Delcher A."/>
            <person name="Utterback T.R."/>
            <person name="Weidman J.F."/>
            <person name="Khouri H.M."/>
            <person name="Gill J."/>
            <person name="Mikula A."/>
            <person name="Bishai W."/>
            <person name="Jacobs W.R. Jr."/>
            <person name="Venter J.C."/>
            <person name="Fraser C.M."/>
        </authorList>
    </citation>
    <scope>NUCLEOTIDE SEQUENCE [LARGE SCALE GENOMIC DNA]</scope>
    <source>
        <strain>CDC 1551 / Oshkosh</strain>
    </source>
</reference>